<dbReference type="EC" id="2.7.1.148" evidence="1"/>
<dbReference type="EMBL" id="AE003849">
    <property type="protein sequence ID" value="AAF85442.1"/>
    <property type="molecule type" value="Genomic_DNA"/>
</dbReference>
<dbReference type="PIR" id="F82532">
    <property type="entry name" value="F82532"/>
</dbReference>
<dbReference type="RefSeq" id="WP_010895059.1">
    <property type="nucleotide sequence ID" value="NC_002488.3"/>
</dbReference>
<dbReference type="SMR" id="Q9PA75"/>
<dbReference type="STRING" id="160492.XF_2645"/>
<dbReference type="KEGG" id="xfa:XF_2645"/>
<dbReference type="eggNOG" id="COG1947">
    <property type="taxonomic scope" value="Bacteria"/>
</dbReference>
<dbReference type="HOGENOM" id="CLU_053057_3_0_6"/>
<dbReference type="UniPathway" id="UPA00056">
    <property type="reaction ID" value="UER00094"/>
</dbReference>
<dbReference type="Proteomes" id="UP000000812">
    <property type="component" value="Chromosome"/>
</dbReference>
<dbReference type="GO" id="GO:0050515">
    <property type="term" value="F:4-(cytidine 5'-diphospho)-2-C-methyl-D-erythritol kinase activity"/>
    <property type="evidence" value="ECO:0007669"/>
    <property type="project" value="UniProtKB-UniRule"/>
</dbReference>
<dbReference type="GO" id="GO:0005524">
    <property type="term" value="F:ATP binding"/>
    <property type="evidence" value="ECO:0007669"/>
    <property type="project" value="UniProtKB-UniRule"/>
</dbReference>
<dbReference type="GO" id="GO:0019288">
    <property type="term" value="P:isopentenyl diphosphate biosynthetic process, methylerythritol 4-phosphate pathway"/>
    <property type="evidence" value="ECO:0007669"/>
    <property type="project" value="UniProtKB-UniRule"/>
</dbReference>
<dbReference type="GO" id="GO:0016114">
    <property type="term" value="P:terpenoid biosynthetic process"/>
    <property type="evidence" value="ECO:0007669"/>
    <property type="project" value="InterPro"/>
</dbReference>
<dbReference type="Gene3D" id="3.30.230.10">
    <property type="match status" value="1"/>
</dbReference>
<dbReference type="Gene3D" id="3.30.70.890">
    <property type="entry name" value="GHMP kinase, C-terminal domain"/>
    <property type="match status" value="1"/>
</dbReference>
<dbReference type="HAMAP" id="MF_00061">
    <property type="entry name" value="IspE"/>
    <property type="match status" value="1"/>
</dbReference>
<dbReference type="InterPro" id="IPR013750">
    <property type="entry name" value="GHMP_kinase_C_dom"/>
</dbReference>
<dbReference type="InterPro" id="IPR036554">
    <property type="entry name" value="GHMP_kinase_C_sf"/>
</dbReference>
<dbReference type="InterPro" id="IPR006204">
    <property type="entry name" value="GHMP_kinase_N_dom"/>
</dbReference>
<dbReference type="InterPro" id="IPR004424">
    <property type="entry name" value="IspE"/>
</dbReference>
<dbReference type="InterPro" id="IPR020568">
    <property type="entry name" value="Ribosomal_Su5_D2-typ_SF"/>
</dbReference>
<dbReference type="InterPro" id="IPR014721">
    <property type="entry name" value="Ribsml_uS5_D2-typ_fold_subgr"/>
</dbReference>
<dbReference type="NCBIfam" id="TIGR00154">
    <property type="entry name" value="ispE"/>
    <property type="match status" value="1"/>
</dbReference>
<dbReference type="PANTHER" id="PTHR43527">
    <property type="entry name" value="4-DIPHOSPHOCYTIDYL-2-C-METHYL-D-ERYTHRITOL KINASE, CHLOROPLASTIC"/>
    <property type="match status" value="1"/>
</dbReference>
<dbReference type="PANTHER" id="PTHR43527:SF2">
    <property type="entry name" value="4-DIPHOSPHOCYTIDYL-2-C-METHYL-D-ERYTHRITOL KINASE, CHLOROPLASTIC"/>
    <property type="match status" value="1"/>
</dbReference>
<dbReference type="Pfam" id="PF08544">
    <property type="entry name" value="GHMP_kinases_C"/>
    <property type="match status" value="1"/>
</dbReference>
<dbReference type="Pfam" id="PF00288">
    <property type="entry name" value="GHMP_kinases_N"/>
    <property type="match status" value="1"/>
</dbReference>
<dbReference type="PIRSF" id="PIRSF010376">
    <property type="entry name" value="IspE"/>
    <property type="match status" value="1"/>
</dbReference>
<dbReference type="SUPFAM" id="SSF55060">
    <property type="entry name" value="GHMP Kinase, C-terminal domain"/>
    <property type="match status" value="1"/>
</dbReference>
<dbReference type="SUPFAM" id="SSF54211">
    <property type="entry name" value="Ribosomal protein S5 domain 2-like"/>
    <property type="match status" value="1"/>
</dbReference>
<proteinExistence type="inferred from homology"/>
<protein>
    <recommendedName>
        <fullName evidence="1">4-diphosphocytidyl-2-C-methyl-D-erythritol kinase</fullName>
        <shortName evidence="1">CMK</shortName>
        <ecNumber evidence="1">2.7.1.148</ecNumber>
    </recommendedName>
    <alternativeName>
        <fullName evidence="1">4-(cytidine-5'-diphospho)-2-C-methyl-D-erythritol kinase</fullName>
    </alternativeName>
</protein>
<feature type="chain" id="PRO_0000189293" description="4-diphosphocytidyl-2-C-methyl-D-erythritol kinase">
    <location>
        <begin position="1"/>
        <end position="298"/>
    </location>
</feature>
<feature type="active site" evidence="1">
    <location>
        <position position="25"/>
    </location>
</feature>
<feature type="active site" evidence="1">
    <location>
        <position position="151"/>
    </location>
</feature>
<feature type="binding site" evidence="1">
    <location>
        <begin position="109"/>
        <end position="119"/>
    </location>
    <ligand>
        <name>ATP</name>
        <dbReference type="ChEBI" id="CHEBI:30616"/>
    </ligand>
</feature>
<keyword id="KW-0067">ATP-binding</keyword>
<keyword id="KW-0414">Isoprene biosynthesis</keyword>
<keyword id="KW-0418">Kinase</keyword>
<keyword id="KW-0547">Nucleotide-binding</keyword>
<keyword id="KW-0808">Transferase</keyword>
<reference key="1">
    <citation type="journal article" date="2000" name="Nature">
        <title>The genome sequence of the plant pathogen Xylella fastidiosa.</title>
        <authorList>
            <person name="Simpson A.J.G."/>
            <person name="Reinach F.C."/>
            <person name="Arruda P."/>
            <person name="Abreu F.A."/>
            <person name="Acencio M."/>
            <person name="Alvarenga R."/>
            <person name="Alves L.M.C."/>
            <person name="Araya J.E."/>
            <person name="Baia G.S."/>
            <person name="Baptista C.S."/>
            <person name="Barros M.H."/>
            <person name="Bonaccorsi E.D."/>
            <person name="Bordin S."/>
            <person name="Bove J.M."/>
            <person name="Briones M.R.S."/>
            <person name="Bueno M.R.P."/>
            <person name="Camargo A.A."/>
            <person name="Camargo L.E.A."/>
            <person name="Carraro D.M."/>
            <person name="Carrer H."/>
            <person name="Colauto N.B."/>
            <person name="Colombo C."/>
            <person name="Costa F.F."/>
            <person name="Costa M.C.R."/>
            <person name="Costa-Neto C.M."/>
            <person name="Coutinho L.L."/>
            <person name="Cristofani M."/>
            <person name="Dias-Neto E."/>
            <person name="Docena C."/>
            <person name="El-Dorry H."/>
            <person name="Facincani A.P."/>
            <person name="Ferreira A.J.S."/>
            <person name="Ferreira V.C.A."/>
            <person name="Ferro J.A."/>
            <person name="Fraga J.S."/>
            <person name="Franca S.C."/>
            <person name="Franco M.C."/>
            <person name="Frohme M."/>
            <person name="Furlan L.R."/>
            <person name="Garnier M."/>
            <person name="Goldman G.H."/>
            <person name="Goldman M.H.S."/>
            <person name="Gomes S.L."/>
            <person name="Gruber A."/>
            <person name="Ho P.L."/>
            <person name="Hoheisel J.D."/>
            <person name="Junqueira M.L."/>
            <person name="Kemper E.L."/>
            <person name="Kitajima J.P."/>
            <person name="Krieger J.E."/>
            <person name="Kuramae E.E."/>
            <person name="Laigret F."/>
            <person name="Lambais M.R."/>
            <person name="Leite L.C.C."/>
            <person name="Lemos E.G.M."/>
            <person name="Lemos M.V.F."/>
            <person name="Lopes S.A."/>
            <person name="Lopes C.R."/>
            <person name="Machado J.A."/>
            <person name="Machado M.A."/>
            <person name="Madeira A.M.B.N."/>
            <person name="Madeira H.M.F."/>
            <person name="Marino C.L."/>
            <person name="Marques M.V."/>
            <person name="Martins E.A.L."/>
            <person name="Martins E.M.F."/>
            <person name="Matsukuma A.Y."/>
            <person name="Menck C.F.M."/>
            <person name="Miracca E.C."/>
            <person name="Miyaki C.Y."/>
            <person name="Monteiro-Vitorello C.B."/>
            <person name="Moon D.H."/>
            <person name="Nagai M.A."/>
            <person name="Nascimento A.L.T.O."/>
            <person name="Netto L.E.S."/>
            <person name="Nhani A. Jr."/>
            <person name="Nobrega F.G."/>
            <person name="Nunes L.R."/>
            <person name="Oliveira M.A."/>
            <person name="de Oliveira M.C."/>
            <person name="de Oliveira R.C."/>
            <person name="Palmieri D.A."/>
            <person name="Paris A."/>
            <person name="Peixoto B.R."/>
            <person name="Pereira G.A.G."/>
            <person name="Pereira H.A. Jr."/>
            <person name="Pesquero J.B."/>
            <person name="Quaggio R.B."/>
            <person name="Roberto P.G."/>
            <person name="Rodrigues V."/>
            <person name="de Rosa A.J.M."/>
            <person name="de Rosa V.E. Jr."/>
            <person name="de Sa R.G."/>
            <person name="Santelli R.V."/>
            <person name="Sawasaki H.E."/>
            <person name="da Silva A.C.R."/>
            <person name="da Silva A.M."/>
            <person name="da Silva F.R."/>
            <person name="Silva W.A. Jr."/>
            <person name="da Silveira J.F."/>
            <person name="Silvestri M.L.Z."/>
            <person name="Siqueira W.J."/>
            <person name="de Souza A.A."/>
            <person name="de Souza A.P."/>
            <person name="Terenzi M.F."/>
            <person name="Truffi D."/>
            <person name="Tsai S.M."/>
            <person name="Tsuhako M.H."/>
            <person name="Vallada H."/>
            <person name="Van Sluys M.A."/>
            <person name="Verjovski-Almeida S."/>
            <person name="Vettore A.L."/>
            <person name="Zago M.A."/>
            <person name="Zatz M."/>
            <person name="Meidanis J."/>
            <person name="Setubal J.C."/>
        </authorList>
    </citation>
    <scope>NUCLEOTIDE SEQUENCE [LARGE SCALE GENOMIC DNA]</scope>
    <source>
        <strain>9a5c</strain>
    </source>
</reference>
<evidence type="ECO:0000255" key="1">
    <source>
        <dbReference type="HAMAP-Rule" id="MF_00061"/>
    </source>
</evidence>
<organism>
    <name type="scientific">Xylella fastidiosa (strain 9a5c)</name>
    <dbReference type="NCBI Taxonomy" id="160492"/>
    <lineage>
        <taxon>Bacteria</taxon>
        <taxon>Pseudomonadati</taxon>
        <taxon>Pseudomonadota</taxon>
        <taxon>Gammaproteobacteria</taxon>
        <taxon>Lysobacterales</taxon>
        <taxon>Lysobacteraceae</taxon>
        <taxon>Xylella</taxon>
    </lineage>
</organism>
<gene>
    <name evidence="1" type="primary">ispE</name>
    <name type="ordered locus">XF_2645</name>
</gene>
<sequence>MGRVDPVSVVVDDGVGWSAWPAPAKLNLFLQITGRRVDGYHELQTVFRLLDWGDTIHLRVREDGQIHRIGESVTGVVEADDLVVRAAYLLKYATNVHLGADIFVEKRIPVGGGFGGGSSDAATVLLVLNALWHTRLDVAVLAALGLRLGADVPVFVHGCNAWAEGVGECLTPMILPGAAYLLLDPGVCVPTRELFLDPDLTRDASPATIGDFIAGTAFGNAFEPVLRRRESAVAGALDVLSEVGFARVTGSGSGCFVEFSTRDEAECALERLPYGLCAWVADGASRSPLLDVLKTMEF</sequence>
<name>ISPE_XYLFA</name>
<accession>Q9PA75</accession>
<comment type="function">
    <text evidence="1">Catalyzes the phosphorylation of the position 2 hydroxy group of 4-diphosphocytidyl-2C-methyl-D-erythritol.</text>
</comment>
<comment type="catalytic activity">
    <reaction evidence="1">
        <text>4-CDP-2-C-methyl-D-erythritol + ATP = 4-CDP-2-C-methyl-D-erythritol 2-phosphate + ADP + H(+)</text>
        <dbReference type="Rhea" id="RHEA:18437"/>
        <dbReference type="ChEBI" id="CHEBI:15378"/>
        <dbReference type="ChEBI" id="CHEBI:30616"/>
        <dbReference type="ChEBI" id="CHEBI:57823"/>
        <dbReference type="ChEBI" id="CHEBI:57919"/>
        <dbReference type="ChEBI" id="CHEBI:456216"/>
        <dbReference type="EC" id="2.7.1.148"/>
    </reaction>
</comment>
<comment type="pathway">
    <text evidence="1">Isoprenoid biosynthesis; isopentenyl diphosphate biosynthesis via DXP pathway; isopentenyl diphosphate from 1-deoxy-D-xylulose 5-phosphate: step 3/6.</text>
</comment>
<comment type="similarity">
    <text evidence="1">Belongs to the GHMP kinase family. IspE subfamily.</text>
</comment>